<keyword id="KW-0002">3D-structure</keyword>
<keyword id="KW-1003">Cell membrane</keyword>
<keyword id="KW-0963">Cytoplasm</keyword>
<keyword id="KW-0268">Exocytosis</keyword>
<keyword id="KW-0472">Membrane</keyword>
<keyword id="KW-0597">Phosphoprotein</keyword>
<keyword id="KW-1185">Reference proteome</keyword>
<keyword id="KW-0677">Repeat</keyword>
<keyword id="KW-0853">WD repeat</keyword>
<organism>
    <name type="scientific">Saccharomyces cerevisiae (strain ATCC 204508 / S288c)</name>
    <name type="common">Baker's yeast</name>
    <dbReference type="NCBI Taxonomy" id="559292"/>
    <lineage>
        <taxon>Eukaryota</taxon>
        <taxon>Fungi</taxon>
        <taxon>Dikarya</taxon>
        <taxon>Ascomycota</taxon>
        <taxon>Saccharomycotina</taxon>
        <taxon>Saccharomycetes</taxon>
        <taxon>Saccharomycetales</taxon>
        <taxon>Saccharomycetaceae</taxon>
        <taxon>Saccharomyces</taxon>
    </lineage>
</organism>
<sequence length="1033" mass="114513">MFGSKRLKNVKEAFKSLKGQNSETPIENSKASFKSKNSKTSTISKDAKSSSSLKIPISSNNKNKIFSLAETNKYGMSSKPIAAAFDFTQNLLAIATVTGEVHIYGQQQVEVVIKLEDRSAIKEMRFVKGIYLVVINAKDTVYVLSLYSQKVLTTVFVPGKITSIDTDASLDWMLIGLQNGSMIVYDIDRDQLSSFKLDNLQKSSFFPAARLSPIVSIQWNPRDIGTVLISYEYVTLTYSLVENEIKQSFIYELPPFAPGGDFSEKTNEKRTPKVIQSLYHPNSLHIITIHEDNSLVFWDANSGHMIMARTVFETEINVPQPDYIRDSSTNAAKISKVYWMCENNPEYTSLLISHKSISRGDNQSLTMIDLGYTPRYSITSYEGMKNYYANPKQMKIFPLPTNVPIVNILPIPRQSPYFAGCHNPGLILLILGNGEIETMLYPSGIFTDKASLFPQNLSWLRPLATTSMAASVPNKLWLGALSAAQNKDYLLKGGVRTKRQKLPAEYGTAFITGHSNGSVRIYDASHGDIQDNASFEVNLSRTLNKAKELAVDKISFAAETLELAVSIETGDVVLFKYEVNQFYSVENRPESGDLEMNFRRFSLNNTNGVLVDVRDRAPTGVRQGFMPSTAVHANKGKTSAINNSNIGFVGIAYAAGSLMLIDRRGPAIIYMENIREISGAQSACVTCIEFVIMEYGDDGYSSILMVCGTDMGEVITYKILPASGGKFDVQLMDITNVTSKGPIHKIDAFSKETKSSCLATIPKMQNLSKGLCIPGIVLITGFDDIRLITLGKSKSTHKGFKYPLAATGLSYISTVEKNNDRKNLTVIITLEINGHLRVFTIPDFKEQMSEHIPFPIAAKYITESSVLRNGDIAIRVSEFQASLFSTVKEQDTLAPVSDTLYINGIRIPYRPQVNSLQWARGTVYCTPAQLNELLGGVNRPASKYKESIIAEGSFSERSSDDNNANHPEHQYTKPTRKGRNSSYGVLRNVSRAVETRWDAVEDRFNDYATAMGETMNEAVEQTGKDVMKGALGF</sequence>
<comment type="function">
    <text evidence="2 3 5 6 7 8 9">Acts as an allosteric regulator of polarized exocytosis by promoting the targeted fusion of vesicles with the plasma membrane. Coordinates the spatial and temporal nature of both Rab-dependent tethering and SNARE-dependent membrane fusion of exocytic vesicles with the plasma membrane. Required for targeting of the sodium pumping ATPase ENA1 to the Cell Surface, thus being involved in maintenance of ion homeostasis in cells exposed to NaCl stress. May be involved in the targeting of the myosin proteins to their intrinsic pathways. Multicopy suppressor of RHO3. May also participate in the maintenance of cell polarity and bud growth.</text>
</comment>
<comment type="subunit">
    <text evidence="2 4 5 7 8">Interacts with MYO2 and SEC9.</text>
</comment>
<comment type="interaction">
    <interactant intactId="EBI-17573">
        <id>Q12038</id>
    </interactant>
    <interactant intactId="EBI-13431">
        <id>P40020</id>
        <label>FIR1</label>
    </interactant>
    <organismsDiffer>false</organismsDiffer>
    <experiments>2</experiments>
</comment>
<comment type="interaction">
    <interactant intactId="EBI-17573">
        <id>Q12038</id>
    </interactant>
    <interactant intactId="EBI-16904">
        <id>P40357</id>
        <label>SEC9</label>
    </interactant>
    <organismsDiffer>false</organismsDiffer>
    <experiments>11</experiments>
</comment>
<comment type="subcellular location">
    <subcellularLocation>
        <location evidence="2 9">Cytoplasm</location>
    </subcellularLocation>
    <subcellularLocation>
        <location evidence="2">Cell membrane</location>
        <topology evidence="2">Peripheral membrane protein</topology>
        <orientation evidence="2">Cytoplasmic side</orientation>
    </subcellularLocation>
</comment>
<comment type="similarity">
    <text evidence="10">Belongs to the WD repeat L(2)GL family.</text>
</comment>
<evidence type="ECO:0000256" key="1">
    <source>
        <dbReference type="SAM" id="MobiDB-lite"/>
    </source>
</evidence>
<evidence type="ECO:0000269" key="2">
    <source>
    </source>
</evidence>
<evidence type="ECO:0000269" key="3">
    <source>
    </source>
</evidence>
<evidence type="ECO:0000269" key="4">
    <source>
    </source>
</evidence>
<evidence type="ECO:0000269" key="5">
    <source>
    </source>
</evidence>
<evidence type="ECO:0000269" key="6">
    <source>
    </source>
</evidence>
<evidence type="ECO:0000269" key="7">
    <source>
    </source>
</evidence>
<evidence type="ECO:0000269" key="8">
    <source>
    </source>
</evidence>
<evidence type="ECO:0000269" key="9">
    <source>
    </source>
</evidence>
<evidence type="ECO:0000305" key="10"/>
<evidence type="ECO:0007744" key="11">
    <source>
    </source>
</evidence>
<evidence type="ECO:0007829" key="12">
    <source>
        <dbReference type="PDB" id="2OAJ"/>
    </source>
</evidence>
<name>SRO7_YEAST</name>
<gene>
    <name type="primary">SRO7</name>
    <name type="synonym">SNI1</name>
    <name type="synonym">SOP1</name>
    <name type="ordered locus">YPR032W</name>
    <name type="ORF">YP9367.12</name>
</gene>
<proteinExistence type="evidence at protein level"/>
<dbReference type="EMBL" id="Z71255">
    <property type="protein sequence ID" value="CAA95028.1"/>
    <property type="molecule type" value="Genomic_DNA"/>
</dbReference>
<dbReference type="EMBL" id="Z49274">
    <property type="protein sequence ID" value="CAA89286.1"/>
    <property type="molecule type" value="Genomic_DNA"/>
</dbReference>
<dbReference type="EMBL" id="BK006949">
    <property type="protein sequence ID" value="DAA11458.1"/>
    <property type="molecule type" value="Genomic_DNA"/>
</dbReference>
<dbReference type="PIR" id="S54506">
    <property type="entry name" value="S54506"/>
</dbReference>
<dbReference type="RefSeq" id="NP_015357.1">
    <property type="nucleotide sequence ID" value="NM_001184129.1"/>
</dbReference>
<dbReference type="PDB" id="2OAJ">
    <property type="method" value="X-ray"/>
    <property type="resolution" value="2.40 A"/>
    <property type="chains" value="A=61-962"/>
</dbReference>
<dbReference type="PDBsum" id="2OAJ"/>
<dbReference type="SMR" id="Q12038"/>
<dbReference type="BioGRID" id="36210">
    <property type="interactions" value="657"/>
</dbReference>
<dbReference type="DIP" id="DIP-2581N"/>
<dbReference type="FunCoup" id="Q12038">
    <property type="interactions" value="149"/>
</dbReference>
<dbReference type="IntAct" id="Q12038">
    <property type="interactions" value="8"/>
</dbReference>
<dbReference type="MINT" id="Q12038"/>
<dbReference type="STRING" id="4932.YPR032W"/>
<dbReference type="iPTMnet" id="Q12038"/>
<dbReference type="PaxDb" id="4932-YPR032W"/>
<dbReference type="PeptideAtlas" id="Q12038"/>
<dbReference type="EnsemblFungi" id="YPR032W_mRNA">
    <property type="protein sequence ID" value="YPR032W"/>
    <property type="gene ID" value="YPR032W"/>
</dbReference>
<dbReference type="GeneID" id="856144"/>
<dbReference type="KEGG" id="sce:YPR032W"/>
<dbReference type="AGR" id="SGD:S000006236"/>
<dbReference type="SGD" id="S000006236">
    <property type="gene designation" value="SRO7"/>
</dbReference>
<dbReference type="VEuPathDB" id="FungiDB:YPR032W"/>
<dbReference type="eggNOG" id="KOG1983">
    <property type="taxonomic scope" value="Eukaryota"/>
</dbReference>
<dbReference type="GeneTree" id="ENSGT00950000182906"/>
<dbReference type="HOGENOM" id="CLU_006030_0_0_1"/>
<dbReference type="InParanoid" id="Q12038"/>
<dbReference type="OMA" id="QIYVFGQ"/>
<dbReference type="OrthoDB" id="19944at2759"/>
<dbReference type="BioCyc" id="YEAST:G3O-34191-MONOMER"/>
<dbReference type="BioGRID-ORCS" id="856144">
    <property type="hits" value="1 hit in 10 CRISPR screens"/>
</dbReference>
<dbReference type="EvolutionaryTrace" id="Q12038"/>
<dbReference type="PRO" id="PR:Q12038"/>
<dbReference type="Proteomes" id="UP000002311">
    <property type="component" value="Chromosome XVI"/>
</dbReference>
<dbReference type="RNAct" id="Q12038">
    <property type="molecule type" value="protein"/>
</dbReference>
<dbReference type="GO" id="GO:0005737">
    <property type="term" value="C:cytoplasm"/>
    <property type="evidence" value="ECO:0000318"/>
    <property type="project" value="GO_Central"/>
</dbReference>
<dbReference type="GO" id="GO:0005829">
    <property type="term" value="C:cytosol"/>
    <property type="evidence" value="ECO:0000314"/>
    <property type="project" value="SGD"/>
</dbReference>
<dbReference type="GO" id="GO:0043332">
    <property type="term" value="C:mating projection tip"/>
    <property type="evidence" value="ECO:0000314"/>
    <property type="project" value="SGD"/>
</dbReference>
<dbReference type="GO" id="GO:0005886">
    <property type="term" value="C:plasma membrane"/>
    <property type="evidence" value="ECO:0000314"/>
    <property type="project" value="SGD"/>
</dbReference>
<dbReference type="GO" id="GO:0005096">
    <property type="term" value="F:GTPase activator activity"/>
    <property type="evidence" value="ECO:0000318"/>
    <property type="project" value="GO_Central"/>
</dbReference>
<dbReference type="GO" id="GO:0045159">
    <property type="term" value="F:myosin II binding"/>
    <property type="evidence" value="ECO:0000318"/>
    <property type="project" value="GO_Central"/>
</dbReference>
<dbReference type="GO" id="GO:0031267">
    <property type="term" value="F:small GTPase binding"/>
    <property type="evidence" value="ECO:0000314"/>
    <property type="project" value="SGD"/>
</dbReference>
<dbReference type="GO" id="GO:0000149">
    <property type="term" value="F:SNARE binding"/>
    <property type="evidence" value="ECO:0000353"/>
    <property type="project" value="SGD"/>
</dbReference>
<dbReference type="GO" id="GO:0019905">
    <property type="term" value="F:syntaxin binding"/>
    <property type="evidence" value="ECO:0000318"/>
    <property type="project" value="GO_Central"/>
</dbReference>
<dbReference type="GO" id="GO:0030010">
    <property type="term" value="P:establishment of cell polarity"/>
    <property type="evidence" value="ECO:0000353"/>
    <property type="project" value="SGD"/>
</dbReference>
<dbReference type="GO" id="GO:0006887">
    <property type="term" value="P:exocytosis"/>
    <property type="evidence" value="ECO:0000315"/>
    <property type="project" value="SGD"/>
</dbReference>
<dbReference type="GO" id="GO:0006893">
    <property type="term" value="P:Golgi to plasma membrane transport"/>
    <property type="evidence" value="ECO:0000315"/>
    <property type="project" value="SGD"/>
</dbReference>
<dbReference type="GO" id="GO:0007264">
    <property type="term" value="P:small GTPase-mediated signal transduction"/>
    <property type="evidence" value="ECO:0000353"/>
    <property type="project" value="SGD"/>
</dbReference>
<dbReference type="FunFam" id="2.130.10.10:FF:000911">
    <property type="entry name" value="Putative Rab GTPase-binding protein"/>
    <property type="match status" value="1"/>
</dbReference>
<dbReference type="Gene3D" id="2.130.10.10">
    <property type="entry name" value="YVTN repeat-like/Quinoprotein amine dehydrogenase"/>
    <property type="match status" value="1"/>
</dbReference>
<dbReference type="InterPro" id="IPR013905">
    <property type="entry name" value="Lgl_C_dom"/>
</dbReference>
<dbReference type="InterPro" id="IPR015943">
    <property type="entry name" value="WD40/YVTN_repeat-like_dom_sf"/>
</dbReference>
<dbReference type="InterPro" id="IPR036322">
    <property type="entry name" value="WD40_repeat_dom_sf"/>
</dbReference>
<dbReference type="PANTHER" id="PTHR10241">
    <property type="entry name" value="LETHAL 2 GIANT LARVAE PROTEIN"/>
    <property type="match status" value="1"/>
</dbReference>
<dbReference type="PANTHER" id="PTHR10241:SF25">
    <property type="entry name" value="TOMOSYN, ISOFORM C"/>
    <property type="match status" value="1"/>
</dbReference>
<dbReference type="Pfam" id="PF08596">
    <property type="entry name" value="Lgl_C"/>
    <property type="match status" value="1"/>
</dbReference>
<dbReference type="SUPFAM" id="SSF50978">
    <property type="entry name" value="WD40 repeat-like"/>
    <property type="match status" value="1"/>
</dbReference>
<dbReference type="PROSITE" id="PS00678">
    <property type="entry name" value="WD_REPEATS_1"/>
    <property type="match status" value="1"/>
</dbReference>
<protein>
    <recommendedName>
        <fullName>Lethal(2) giant larvae protein homolog SRO7</fullName>
    </recommendedName>
    <alternativeName>
        <fullName>Polarity protein SRO7</fullName>
    </alternativeName>
    <alternativeName>
        <fullName>Sodium protection protein 1</fullName>
    </alternativeName>
    <alternativeName>
        <fullName>Suppressor of RHO3 protein 7</fullName>
    </alternativeName>
</protein>
<feature type="chain" id="PRO_0000072008" description="Lethal(2) giant larvae protein homolog SRO7">
    <location>
        <begin position="1"/>
        <end position="1033"/>
    </location>
</feature>
<feature type="repeat" description="WD 1" evidence="7">
    <location>
        <begin position="81"/>
        <end position="114"/>
    </location>
</feature>
<feature type="repeat" description="WD 2" evidence="7">
    <location>
        <begin position="121"/>
        <end position="156"/>
    </location>
</feature>
<feature type="repeat" description="WD 3" evidence="7">
    <location>
        <begin position="161"/>
        <end position="197"/>
    </location>
</feature>
<feature type="repeat" description="WD 4" evidence="7">
    <location>
        <begin position="216"/>
        <end position="249"/>
    </location>
</feature>
<feature type="repeat" description="WD 5" evidence="7">
    <location>
        <begin position="274"/>
        <end position="309"/>
    </location>
</feature>
<feature type="repeat" description="WD 6" evidence="7">
    <location>
        <begin position="333"/>
        <end position="397"/>
    </location>
</feature>
<feature type="repeat" description="WD 7" evidence="7">
    <location>
        <begin position="405"/>
        <end position="440"/>
    </location>
</feature>
<feature type="repeat" description="WD 8" evidence="7">
    <location>
        <begin position="464"/>
        <end position="538"/>
    </location>
</feature>
<feature type="repeat" description="WD 9" evidence="7">
    <location>
        <begin position="552"/>
        <end position="631"/>
    </location>
</feature>
<feature type="repeat" description="WD 10" evidence="7">
    <location>
        <begin position="638"/>
        <end position="673"/>
    </location>
</feature>
<feature type="repeat" description="WD 11" evidence="7">
    <location>
        <begin position="685"/>
        <end position="736"/>
    </location>
</feature>
<feature type="repeat" description="WD 12" evidence="7">
    <location>
        <begin position="745"/>
        <end position="799"/>
    </location>
</feature>
<feature type="repeat" description="WD 13" evidence="7">
    <location>
        <begin position="804"/>
        <end position="851"/>
    </location>
</feature>
<feature type="repeat" description="WD 14" evidence="7">
    <location>
        <begin position="865"/>
        <end position="888"/>
    </location>
</feature>
<feature type="region of interest" description="Disordered" evidence="1">
    <location>
        <begin position="16"/>
        <end position="45"/>
    </location>
</feature>
<feature type="region of interest" description="Disordered" evidence="1">
    <location>
        <begin position="953"/>
        <end position="984"/>
    </location>
</feature>
<feature type="compositionally biased region" description="Polar residues" evidence="1">
    <location>
        <begin position="18"/>
        <end position="27"/>
    </location>
</feature>
<feature type="compositionally biased region" description="Low complexity" evidence="1">
    <location>
        <begin position="28"/>
        <end position="45"/>
    </location>
</feature>
<feature type="modified residue" description="Phosphoserine" evidence="11">
    <location>
        <position position="591"/>
    </location>
</feature>
<feature type="modified residue" description="Phosphoserine" evidence="11">
    <location>
        <position position="602"/>
    </location>
</feature>
<feature type="strand" evidence="12">
    <location>
        <begin position="66"/>
        <end position="75"/>
    </location>
</feature>
<feature type="strand" evidence="12">
    <location>
        <begin position="80"/>
        <end position="86"/>
    </location>
</feature>
<feature type="turn" evidence="12">
    <location>
        <begin position="87"/>
        <end position="90"/>
    </location>
</feature>
<feature type="strand" evidence="12">
    <location>
        <begin position="91"/>
        <end position="96"/>
    </location>
</feature>
<feature type="strand" evidence="12">
    <location>
        <begin position="99"/>
        <end position="104"/>
    </location>
</feature>
<feature type="strand" evidence="12">
    <location>
        <begin position="110"/>
        <end position="114"/>
    </location>
</feature>
<feature type="strand" evidence="12">
    <location>
        <begin position="121"/>
        <end position="127"/>
    </location>
</feature>
<feature type="turn" evidence="12">
    <location>
        <begin position="128"/>
        <end position="130"/>
    </location>
</feature>
<feature type="strand" evidence="12">
    <location>
        <begin position="131"/>
        <end position="136"/>
    </location>
</feature>
<feature type="strand" evidence="12">
    <location>
        <begin position="140"/>
        <end position="145"/>
    </location>
</feature>
<feature type="turn" evidence="12">
    <location>
        <begin position="146"/>
        <end position="148"/>
    </location>
</feature>
<feature type="strand" evidence="12">
    <location>
        <begin position="150"/>
        <end position="156"/>
    </location>
</feature>
<feature type="strand" evidence="12">
    <location>
        <begin position="161"/>
        <end position="165"/>
    </location>
</feature>
<feature type="strand" evidence="12">
    <location>
        <begin position="171"/>
        <end position="177"/>
    </location>
</feature>
<feature type="strand" evidence="12">
    <location>
        <begin position="182"/>
        <end position="186"/>
    </location>
</feature>
<feature type="turn" evidence="12">
    <location>
        <begin position="187"/>
        <end position="190"/>
    </location>
</feature>
<feature type="strand" evidence="12">
    <location>
        <begin position="191"/>
        <end position="197"/>
    </location>
</feature>
<feature type="helix" evidence="12">
    <location>
        <begin position="200"/>
        <end position="204"/>
    </location>
</feature>
<feature type="strand" evidence="12">
    <location>
        <begin position="207"/>
        <end position="209"/>
    </location>
</feature>
<feature type="strand" evidence="12">
    <location>
        <begin position="216"/>
        <end position="220"/>
    </location>
</feature>
<feature type="strand" evidence="12">
    <location>
        <begin position="223"/>
        <end position="230"/>
    </location>
</feature>
<feature type="strand" evidence="12">
    <location>
        <begin position="235"/>
        <end position="239"/>
    </location>
</feature>
<feature type="turn" evidence="12">
    <location>
        <begin position="240"/>
        <end position="243"/>
    </location>
</feature>
<feature type="strand" evidence="12">
    <location>
        <begin position="244"/>
        <end position="249"/>
    </location>
</feature>
<feature type="strand" evidence="12">
    <location>
        <begin position="274"/>
        <end position="279"/>
    </location>
</feature>
<feature type="strand" evidence="12">
    <location>
        <begin position="283"/>
        <end position="290"/>
    </location>
</feature>
<feature type="strand" evidence="12">
    <location>
        <begin position="295"/>
        <end position="299"/>
    </location>
</feature>
<feature type="turn" evidence="12">
    <location>
        <begin position="300"/>
        <end position="302"/>
    </location>
</feature>
<feature type="strand" evidence="12">
    <location>
        <begin position="305"/>
        <end position="309"/>
    </location>
</feature>
<feature type="strand" evidence="12">
    <location>
        <begin position="333"/>
        <end position="341"/>
    </location>
</feature>
<feature type="strand" evidence="12">
    <location>
        <begin position="347"/>
        <end position="355"/>
    </location>
</feature>
<feature type="strand" evidence="12">
    <location>
        <begin position="365"/>
        <end position="372"/>
    </location>
</feature>
<feature type="helix" evidence="12">
    <location>
        <begin position="376"/>
        <end position="378"/>
    </location>
</feature>
<feature type="helix" evidence="12">
    <location>
        <begin position="381"/>
        <end position="389"/>
    </location>
</feature>
<feature type="strand" evidence="12">
    <location>
        <begin position="392"/>
        <end position="397"/>
    </location>
</feature>
<feature type="strand" evidence="12">
    <location>
        <begin position="400"/>
        <end position="403"/>
    </location>
</feature>
<feature type="strand" evidence="12">
    <location>
        <begin position="405"/>
        <end position="410"/>
    </location>
</feature>
<feature type="helix" evidence="12">
    <location>
        <begin position="417"/>
        <end position="420"/>
    </location>
</feature>
<feature type="strand" evidence="12">
    <location>
        <begin position="425"/>
        <end position="431"/>
    </location>
</feature>
<feature type="strand" evidence="12">
    <location>
        <begin position="436"/>
        <end position="440"/>
    </location>
</feature>
<feature type="turn" evidence="12">
    <location>
        <begin position="441"/>
        <end position="443"/>
    </location>
</feature>
<feature type="helix" evidence="12">
    <location>
        <begin position="450"/>
        <end position="452"/>
    </location>
</feature>
<feature type="helix" evidence="12">
    <location>
        <begin position="455"/>
        <end position="460"/>
    </location>
</feature>
<feature type="turn" evidence="12">
    <location>
        <begin position="461"/>
        <end position="463"/>
    </location>
</feature>
<feature type="strand" evidence="12">
    <location>
        <begin position="464"/>
        <end position="473"/>
    </location>
</feature>
<feature type="helix" evidence="12">
    <location>
        <begin position="474"/>
        <end position="482"/>
    </location>
</feature>
<feature type="strand" evidence="12">
    <location>
        <begin position="505"/>
        <end position="514"/>
    </location>
</feature>
<feature type="strand" evidence="12">
    <location>
        <begin position="517"/>
        <end position="525"/>
    </location>
</feature>
<feature type="turn" evidence="12">
    <location>
        <begin position="528"/>
        <end position="532"/>
    </location>
</feature>
<feature type="strand" evidence="12">
    <location>
        <begin position="535"/>
        <end position="538"/>
    </location>
</feature>
<feature type="helix" evidence="12">
    <location>
        <begin position="539"/>
        <end position="542"/>
    </location>
</feature>
<feature type="strand" evidence="12">
    <location>
        <begin position="546"/>
        <end position="548"/>
    </location>
</feature>
<feature type="strand" evidence="12">
    <location>
        <begin position="551"/>
        <end position="557"/>
    </location>
</feature>
<feature type="turn" evidence="12">
    <location>
        <begin position="558"/>
        <end position="561"/>
    </location>
</feature>
<feature type="strand" evidence="12">
    <location>
        <begin position="562"/>
        <end position="567"/>
    </location>
</feature>
<feature type="strand" evidence="12">
    <location>
        <begin position="572"/>
        <end position="579"/>
    </location>
</feature>
<feature type="helix" evidence="12">
    <location>
        <begin position="603"/>
        <end position="605"/>
    </location>
</feature>
<feature type="strand" evidence="12">
    <location>
        <begin position="609"/>
        <end position="612"/>
    </location>
</feature>
<feature type="helix" evidence="12">
    <location>
        <begin position="614"/>
        <end position="616"/>
    </location>
</feature>
<feature type="strand" evidence="12">
    <location>
        <begin position="622"/>
        <end position="631"/>
    </location>
</feature>
<feature type="strand" evidence="12">
    <location>
        <begin position="637"/>
        <end position="643"/>
    </location>
</feature>
<feature type="strand" evidence="12">
    <location>
        <begin position="647"/>
        <end position="653"/>
    </location>
</feature>
<feature type="strand" evidence="12">
    <location>
        <begin position="656"/>
        <end position="662"/>
    </location>
</feature>
<feature type="turn" evidence="12">
    <location>
        <begin position="663"/>
        <end position="666"/>
    </location>
</feature>
<feature type="strand" evidence="12">
    <location>
        <begin position="667"/>
        <end position="673"/>
    </location>
</feature>
<feature type="helix" evidence="12">
    <location>
        <begin position="674"/>
        <end position="676"/>
    </location>
</feature>
<feature type="strand" evidence="12">
    <location>
        <begin position="685"/>
        <end position="694"/>
    </location>
</feature>
<feature type="strand" evidence="12">
    <location>
        <begin position="698"/>
        <end position="709"/>
    </location>
</feature>
<feature type="strand" evidence="12">
    <location>
        <begin position="712"/>
        <end position="721"/>
    </location>
</feature>
<feature type="helix" evidence="12">
    <location>
        <begin position="723"/>
        <end position="725"/>
    </location>
</feature>
<feature type="strand" evidence="12">
    <location>
        <begin position="727"/>
        <end position="736"/>
    </location>
</feature>
<feature type="strand" evidence="12">
    <location>
        <begin position="745"/>
        <end position="750"/>
    </location>
</feature>
<feature type="turn" evidence="12">
    <location>
        <begin position="751"/>
        <end position="753"/>
    </location>
</feature>
<feature type="helix" evidence="12">
    <location>
        <begin position="761"/>
        <end position="765"/>
    </location>
</feature>
<feature type="helix" evidence="12">
    <location>
        <begin position="766"/>
        <end position="769"/>
    </location>
</feature>
<feature type="strand" evidence="12">
    <location>
        <begin position="775"/>
        <end position="780"/>
    </location>
</feature>
<feature type="strand" evidence="12">
    <location>
        <begin position="782"/>
        <end position="788"/>
    </location>
</feature>
<feature type="strand" evidence="12">
    <location>
        <begin position="795"/>
        <end position="799"/>
    </location>
</feature>
<feature type="strand" evidence="12">
    <location>
        <begin position="804"/>
        <end position="815"/>
    </location>
</feature>
<feature type="strand" evidence="12">
    <location>
        <begin position="817"/>
        <end position="819"/>
    </location>
</feature>
<feature type="strand" evidence="12">
    <location>
        <begin position="821"/>
        <end position="831"/>
    </location>
</feature>
<feature type="strand" evidence="12">
    <location>
        <begin position="834"/>
        <end position="840"/>
    </location>
</feature>
<feature type="turn" evidence="12">
    <location>
        <begin position="841"/>
        <end position="843"/>
    </location>
</feature>
<feature type="strand" evidence="12">
    <location>
        <begin position="846"/>
        <end position="851"/>
    </location>
</feature>
<feature type="helix" evidence="12">
    <location>
        <begin position="858"/>
        <end position="861"/>
    </location>
</feature>
<feature type="strand" evidence="12">
    <location>
        <begin position="872"/>
        <end position="875"/>
    </location>
</feature>
<feature type="strand" evidence="12">
    <location>
        <begin position="877"/>
        <end position="888"/>
    </location>
</feature>
<feature type="turn" evidence="12">
    <location>
        <begin position="915"/>
        <end position="917"/>
    </location>
</feature>
<feature type="helix" evidence="12">
    <location>
        <begin position="927"/>
        <end position="935"/>
    </location>
</feature>
<feature type="helix" evidence="12">
    <location>
        <begin position="945"/>
        <end position="949"/>
    </location>
</feature>
<accession>Q12038</accession>
<accession>D6W442</accession>
<reference key="1">
    <citation type="journal article" date="1997" name="Nature">
        <title>The nucleotide sequence of Saccharomyces cerevisiae chromosome XVI.</title>
        <authorList>
            <person name="Bussey H."/>
            <person name="Storms R.K."/>
            <person name="Ahmed A."/>
            <person name="Albermann K."/>
            <person name="Allen E."/>
            <person name="Ansorge W."/>
            <person name="Araujo R."/>
            <person name="Aparicio A."/>
            <person name="Barrell B.G."/>
            <person name="Badcock K."/>
            <person name="Benes V."/>
            <person name="Botstein D."/>
            <person name="Bowman S."/>
            <person name="Brueckner M."/>
            <person name="Carpenter J."/>
            <person name="Cherry J.M."/>
            <person name="Chung E."/>
            <person name="Churcher C.M."/>
            <person name="Coster F."/>
            <person name="Davis K."/>
            <person name="Davis R.W."/>
            <person name="Dietrich F.S."/>
            <person name="Delius H."/>
            <person name="DiPaolo T."/>
            <person name="Dubois E."/>
            <person name="Duesterhoeft A."/>
            <person name="Duncan M."/>
            <person name="Floeth M."/>
            <person name="Fortin N."/>
            <person name="Friesen J.D."/>
            <person name="Fritz C."/>
            <person name="Goffeau A."/>
            <person name="Hall J."/>
            <person name="Hebling U."/>
            <person name="Heumann K."/>
            <person name="Hilbert H."/>
            <person name="Hillier L.W."/>
            <person name="Hunicke-Smith S."/>
            <person name="Hyman R.W."/>
            <person name="Johnston M."/>
            <person name="Kalman S."/>
            <person name="Kleine K."/>
            <person name="Komp C."/>
            <person name="Kurdi O."/>
            <person name="Lashkari D."/>
            <person name="Lew H."/>
            <person name="Lin A."/>
            <person name="Lin D."/>
            <person name="Louis E.J."/>
            <person name="Marathe R."/>
            <person name="Messenguy F."/>
            <person name="Mewes H.-W."/>
            <person name="Mirtipati S."/>
            <person name="Moestl D."/>
            <person name="Mueller-Auer S."/>
            <person name="Namath A."/>
            <person name="Nentwich U."/>
            <person name="Oefner P."/>
            <person name="Pearson D."/>
            <person name="Petel F.X."/>
            <person name="Pohl T.M."/>
            <person name="Purnelle B."/>
            <person name="Rajandream M.A."/>
            <person name="Rechmann S."/>
            <person name="Rieger M."/>
            <person name="Riles L."/>
            <person name="Roberts D."/>
            <person name="Schaefer M."/>
            <person name="Scharfe M."/>
            <person name="Scherens B."/>
            <person name="Schramm S."/>
            <person name="Schroeder M."/>
            <person name="Sdicu A.-M."/>
            <person name="Tettelin H."/>
            <person name="Urrestarazu L.A."/>
            <person name="Ushinsky S."/>
            <person name="Vierendeels F."/>
            <person name="Vissers S."/>
            <person name="Voss H."/>
            <person name="Walsh S.V."/>
            <person name="Wambutt R."/>
            <person name="Wang Y."/>
            <person name="Wedler E."/>
            <person name="Wedler H."/>
            <person name="Winnett E."/>
            <person name="Zhong W.-W."/>
            <person name="Zollner A."/>
            <person name="Vo D.H."/>
            <person name="Hani J."/>
        </authorList>
    </citation>
    <scope>NUCLEOTIDE SEQUENCE [LARGE SCALE GENOMIC DNA]</scope>
    <source>
        <strain>ATCC 204508 / S288c</strain>
    </source>
</reference>
<reference key="2">
    <citation type="journal article" date="2014" name="G3 (Bethesda)">
        <title>The reference genome sequence of Saccharomyces cerevisiae: Then and now.</title>
        <authorList>
            <person name="Engel S.R."/>
            <person name="Dietrich F.S."/>
            <person name="Fisk D.G."/>
            <person name="Binkley G."/>
            <person name="Balakrishnan R."/>
            <person name="Costanzo M.C."/>
            <person name="Dwight S.S."/>
            <person name="Hitz B.C."/>
            <person name="Karra K."/>
            <person name="Nash R.S."/>
            <person name="Weng S."/>
            <person name="Wong E.D."/>
            <person name="Lloyd P."/>
            <person name="Skrzypek M.S."/>
            <person name="Miyasato S.R."/>
            <person name="Simison M."/>
            <person name="Cherry J.M."/>
        </authorList>
    </citation>
    <scope>GENOME REANNOTATION</scope>
    <source>
        <strain>ATCC 204508 / S288c</strain>
    </source>
</reference>
<reference key="3">
    <citation type="journal article" date="1998" name="Genetics">
        <title>Sro7p, a Saccharomyces cerevisiae counterpart of the tumor suppressor l(2)gl protein, is related to myosins in function.</title>
        <authorList>
            <person name="Kagami M."/>
            <person name="Toh-e A."/>
            <person name="Matsui Y."/>
        </authorList>
    </citation>
    <scope>CHARACTERIZATION</scope>
</reference>
<reference key="4">
    <citation type="journal article" date="1998" name="J. Biol. Chem.">
        <title>The Saccharomyces cerevisiae SOP1 and SOP2 genes, which act in cation homeostasis, can be functionally substituted by the Drosophila lethal(2)giant larvae tumor suppressor gene.</title>
        <authorList>
            <person name="Larsson K."/>
            <person name="Bohl F."/>
            <person name="Sjostrom I."/>
            <person name="Akhtar N."/>
            <person name="Strand D."/>
            <person name="Mechler B.M."/>
            <person name="Grabowski R."/>
            <person name="Adler L."/>
        </authorList>
    </citation>
    <scope>FUNCTION</scope>
    <scope>SUBCELLULAR LOCATION</scope>
</reference>
<reference key="5">
    <citation type="journal article" date="1999" name="J. Cell Biol.">
        <title>Yeast homologues of tomosyn and lethal giant larvae function in exocytosis and are associated with the plasma membrane SNARE, Sec9.</title>
        <authorList>
            <person name="Lehman K."/>
            <person name="Rossi G."/>
            <person name="Adamo J.E."/>
            <person name="Brennwald P."/>
        </authorList>
    </citation>
    <scope>FUNCTION</scope>
    <scope>SUBCELLULAR LOCATION</scope>
    <scope>INTERACTION WITH SEC9</scope>
</reference>
<reference key="6">
    <citation type="journal article" date="2003" name="Proc. Natl. Acad. Sci. U.S.A.">
        <title>High-resolution yeast phenomics resolves different physiological features in the saline response.</title>
        <authorList>
            <person name="Warringer J."/>
            <person name="Ericson E."/>
            <person name="Fernandez L."/>
            <person name="Nerman O."/>
            <person name="Blomberg A."/>
        </authorList>
    </citation>
    <scope>FUNCTION</scope>
</reference>
<reference key="7">
    <citation type="journal article" date="2005" name="Curr. Biol.">
        <title>Structurally conserved interaction of Lgl family with SNAREs is critical to their cellular function.</title>
        <authorList>
            <person name="Gangar A."/>
            <person name="Rossi G."/>
            <person name="Andreeva A."/>
            <person name="Hales R."/>
            <person name="Brennwald P."/>
        </authorList>
    </citation>
    <scope>INTERACTION WITH MYO2 AND SEC9</scope>
</reference>
<reference key="8">
    <citation type="journal article" date="2006" name="J. Cell Biol.">
        <title>The yeast lgl family member Sro7p is an effector of the secretory Rab GTPase Sec4p.</title>
        <authorList>
            <person name="Grosshans B.L."/>
            <person name="Andreeva A."/>
            <person name="Gangar A."/>
            <person name="Niessen S."/>
            <person name="Yates J.R. III"/>
            <person name="Brennwald P."/>
            <person name="Novick P."/>
        </authorList>
    </citation>
    <scope>FUNCTION</scope>
    <scope>INTERACTION WITH SEC4 AND SEC9</scope>
</reference>
<reference key="9">
    <citation type="journal article" date="2006" name="Mol. Biol. Cell">
        <title>The yeast tumor suppressor homologue Sro7p is required for targeting of the sodium pumping ATPase to the cell surface.</title>
        <authorList>
            <person name="Wadskog I."/>
            <person name="Forsmark A."/>
            <person name="Rossi G."/>
            <person name="Konopka C."/>
            <person name="Oyen M."/>
            <person name="Goksor M."/>
            <person name="Ronne H."/>
            <person name="Brennwald P."/>
            <person name="Adler L."/>
        </authorList>
    </citation>
    <scope>FUNCTION</scope>
</reference>
<reference key="10">
    <citation type="journal article" date="2008" name="Mol. Cell. Proteomics">
        <title>A multidimensional chromatography technology for in-depth phosphoproteome analysis.</title>
        <authorList>
            <person name="Albuquerque C.P."/>
            <person name="Smolka M.B."/>
            <person name="Payne S.H."/>
            <person name="Bafna V."/>
            <person name="Eng J."/>
            <person name="Zhou H."/>
        </authorList>
    </citation>
    <scope>PHOSPHORYLATION [LARGE SCALE ANALYSIS] AT SER-591 AND SER-602</scope>
    <scope>IDENTIFICATION BY MASS SPECTROMETRY [LARGE SCALE ANALYSIS]</scope>
</reference>
<reference key="11">
    <citation type="journal article" date="2011" name="Mol. Biol. Cell">
        <title>Yeast homologues of lethal giant larvae and type V myosin cooperate in the regulation of Rab-dependent vesicle clustering and polarized exocytosis.</title>
        <authorList>
            <person name="Rossi G."/>
            <person name="Brennwald P."/>
        </authorList>
    </citation>
    <scope>FUNCTION</scope>
    <scope>INTERACTION WITH MYO2</scope>
</reference>
<reference key="12">
    <citation type="journal article" date="2007" name="Nature">
        <title>Structure of the yeast polarity protein Sro7 reveals a SNARE regulatory mechanism.</title>
        <authorList>
            <person name="Hattendorf D.A."/>
            <person name="Andreeva A."/>
            <person name="Gangar A."/>
            <person name="Brennwald P.J."/>
            <person name="Weis W.I."/>
        </authorList>
    </citation>
    <scope>X-RAY CRYSTALLOGRAPHY (2.4 ANGSTROMS) OF 61-962</scope>
    <scope>FUNCTION</scope>
    <scope>WD REPEATS</scope>
    <scope>INTERACTION WITH SEC9</scope>
</reference>